<name>RPOC1_SYNY3</name>
<dbReference type="EC" id="2.7.7.6" evidence="1"/>
<dbReference type="EMBL" id="BA000022">
    <property type="protein sequence ID" value="BAA18266.1"/>
    <property type="molecule type" value="Genomic_DNA"/>
</dbReference>
<dbReference type="PIR" id="S75807">
    <property type="entry name" value="S75807"/>
</dbReference>
<dbReference type="PDB" id="8GZG">
    <property type="method" value="EM"/>
    <property type="resolution" value="3.13 A"/>
    <property type="chains" value="D=1-626"/>
</dbReference>
<dbReference type="PDB" id="8GZH">
    <property type="method" value="EM"/>
    <property type="resolution" value="2.96 A"/>
    <property type="chains" value="D=1-626"/>
</dbReference>
<dbReference type="PDBsum" id="8GZG"/>
<dbReference type="PDBsum" id="8GZH"/>
<dbReference type="EMDB" id="EMD-34397"/>
<dbReference type="EMDB" id="EMD-34398"/>
<dbReference type="SMR" id="P74177"/>
<dbReference type="IntAct" id="P74177">
    <property type="interactions" value="1"/>
</dbReference>
<dbReference type="STRING" id="1148.gene:10499142"/>
<dbReference type="PaxDb" id="1148-1653352"/>
<dbReference type="EnsemblBacteria" id="BAA18266">
    <property type="protein sequence ID" value="BAA18266"/>
    <property type="gene ID" value="BAA18266"/>
</dbReference>
<dbReference type="KEGG" id="syn:slr1265"/>
<dbReference type="eggNOG" id="COG0086">
    <property type="taxonomic scope" value="Bacteria"/>
</dbReference>
<dbReference type="InParanoid" id="P74177"/>
<dbReference type="PhylomeDB" id="P74177"/>
<dbReference type="Proteomes" id="UP000001425">
    <property type="component" value="Chromosome"/>
</dbReference>
<dbReference type="GO" id="GO:0000428">
    <property type="term" value="C:DNA-directed RNA polymerase complex"/>
    <property type="evidence" value="ECO:0007669"/>
    <property type="project" value="UniProtKB-KW"/>
</dbReference>
<dbReference type="GO" id="GO:0003677">
    <property type="term" value="F:DNA binding"/>
    <property type="evidence" value="ECO:0007669"/>
    <property type="project" value="UniProtKB-UniRule"/>
</dbReference>
<dbReference type="GO" id="GO:0003899">
    <property type="term" value="F:DNA-directed RNA polymerase activity"/>
    <property type="evidence" value="ECO:0007669"/>
    <property type="project" value="UniProtKB-UniRule"/>
</dbReference>
<dbReference type="GO" id="GO:0000287">
    <property type="term" value="F:magnesium ion binding"/>
    <property type="evidence" value="ECO:0007669"/>
    <property type="project" value="UniProtKB-UniRule"/>
</dbReference>
<dbReference type="GO" id="GO:0008270">
    <property type="term" value="F:zinc ion binding"/>
    <property type="evidence" value="ECO:0007669"/>
    <property type="project" value="UniProtKB-UniRule"/>
</dbReference>
<dbReference type="GO" id="GO:0006351">
    <property type="term" value="P:DNA-templated transcription"/>
    <property type="evidence" value="ECO:0007669"/>
    <property type="project" value="UniProtKB-UniRule"/>
</dbReference>
<dbReference type="Gene3D" id="1.10.40.90">
    <property type="match status" value="1"/>
</dbReference>
<dbReference type="Gene3D" id="2.40.40.20">
    <property type="match status" value="1"/>
</dbReference>
<dbReference type="Gene3D" id="4.10.860.120">
    <property type="entry name" value="RNA polymerase II, clamp domain"/>
    <property type="match status" value="1"/>
</dbReference>
<dbReference type="Gene3D" id="1.10.274.100">
    <property type="entry name" value="RNA polymerase Rpb1, domain 3"/>
    <property type="match status" value="1"/>
</dbReference>
<dbReference type="HAMAP" id="MF_01323">
    <property type="entry name" value="RNApol_bact_RpoC1"/>
    <property type="match status" value="1"/>
</dbReference>
<dbReference type="InterPro" id="IPR012755">
    <property type="entry name" value="DNA-dir_RpoC1_gamma"/>
</dbReference>
<dbReference type="InterPro" id="IPR045867">
    <property type="entry name" value="DNA-dir_RpoC_beta_prime"/>
</dbReference>
<dbReference type="InterPro" id="IPR000722">
    <property type="entry name" value="RNA_pol_asu"/>
</dbReference>
<dbReference type="InterPro" id="IPR006592">
    <property type="entry name" value="RNA_pol_N"/>
</dbReference>
<dbReference type="InterPro" id="IPR007080">
    <property type="entry name" value="RNA_pol_Rpb1_1"/>
</dbReference>
<dbReference type="InterPro" id="IPR007066">
    <property type="entry name" value="RNA_pol_Rpb1_3"/>
</dbReference>
<dbReference type="InterPro" id="IPR042102">
    <property type="entry name" value="RNA_pol_Rpb1_3_sf"/>
</dbReference>
<dbReference type="InterPro" id="IPR044893">
    <property type="entry name" value="RNA_pol_Rpb1_clamp_domain"/>
</dbReference>
<dbReference type="InterPro" id="IPR034678">
    <property type="entry name" value="RNApol_RpoC1"/>
</dbReference>
<dbReference type="NCBIfam" id="NF002729">
    <property type="entry name" value="PRK02625.1"/>
    <property type="match status" value="1"/>
</dbReference>
<dbReference type="NCBIfam" id="TIGR02387">
    <property type="entry name" value="rpoC1_cyan"/>
    <property type="match status" value="1"/>
</dbReference>
<dbReference type="PANTHER" id="PTHR19376">
    <property type="entry name" value="DNA-DIRECTED RNA POLYMERASE"/>
    <property type="match status" value="1"/>
</dbReference>
<dbReference type="PANTHER" id="PTHR19376:SF54">
    <property type="entry name" value="DNA-DIRECTED RNA POLYMERASE SUBUNIT BETA"/>
    <property type="match status" value="1"/>
</dbReference>
<dbReference type="Pfam" id="PF04997">
    <property type="entry name" value="RNA_pol_Rpb1_1"/>
    <property type="match status" value="1"/>
</dbReference>
<dbReference type="Pfam" id="PF00623">
    <property type="entry name" value="RNA_pol_Rpb1_2"/>
    <property type="match status" value="2"/>
</dbReference>
<dbReference type="Pfam" id="PF04983">
    <property type="entry name" value="RNA_pol_Rpb1_3"/>
    <property type="match status" value="1"/>
</dbReference>
<dbReference type="SMART" id="SM00663">
    <property type="entry name" value="RPOLA_N"/>
    <property type="match status" value="1"/>
</dbReference>
<dbReference type="SUPFAM" id="SSF64484">
    <property type="entry name" value="beta and beta-prime subunits of DNA dependent RNA-polymerase"/>
    <property type="match status" value="1"/>
</dbReference>
<proteinExistence type="evidence at protein level"/>
<feature type="chain" id="PRO_0000067856" description="DNA-directed RNA polymerase subunit gamma">
    <location>
        <begin position="1"/>
        <end position="626"/>
    </location>
</feature>
<feature type="binding site" evidence="1">
    <location>
        <position position="71"/>
    </location>
    <ligand>
        <name>Zn(2+)</name>
        <dbReference type="ChEBI" id="CHEBI:29105"/>
    </ligand>
</feature>
<feature type="binding site" evidence="1">
    <location>
        <position position="73"/>
    </location>
    <ligand>
        <name>Zn(2+)</name>
        <dbReference type="ChEBI" id="CHEBI:29105"/>
    </ligand>
</feature>
<feature type="binding site" evidence="1">
    <location>
        <position position="86"/>
    </location>
    <ligand>
        <name>Zn(2+)</name>
        <dbReference type="ChEBI" id="CHEBI:29105"/>
    </ligand>
</feature>
<feature type="binding site" evidence="1">
    <location>
        <position position="89"/>
    </location>
    <ligand>
        <name>Zn(2+)</name>
        <dbReference type="ChEBI" id="CHEBI:29105"/>
    </ligand>
</feature>
<feature type="binding site" evidence="1">
    <location>
        <position position="467"/>
    </location>
    <ligand>
        <name>Mg(2+)</name>
        <dbReference type="ChEBI" id="CHEBI:18420"/>
    </ligand>
</feature>
<feature type="binding site" evidence="1">
    <location>
        <position position="469"/>
    </location>
    <ligand>
        <name>Mg(2+)</name>
        <dbReference type="ChEBI" id="CHEBI:18420"/>
    </ligand>
</feature>
<feature type="binding site" evidence="1">
    <location>
        <position position="471"/>
    </location>
    <ligand>
        <name>Mg(2+)</name>
        <dbReference type="ChEBI" id="CHEBI:18420"/>
    </ligand>
</feature>
<feature type="strand" evidence="3">
    <location>
        <begin position="10"/>
        <end position="13"/>
    </location>
</feature>
<feature type="helix" evidence="3">
    <location>
        <begin position="19"/>
        <end position="26"/>
    </location>
</feature>
<feature type="strand" evidence="2">
    <location>
        <begin position="31"/>
        <end position="34"/>
    </location>
</feature>
<feature type="strand" evidence="3">
    <location>
        <begin position="47"/>
        <end position="49"/>
    </location>
</feature>
<feature type="strand" evidence="3">
    <location>
        <begin position="54"/>
        <end position="56"/>
    </location>
</feature>
<feature type="helix" evidence="3">
    <location>
        <begin position="60"/>
        <end position="63"/>
    </location>
</feature>
<feature type="strand" evidence="3">
    <location>
        <begin position="72"/>
        <end position="75"/>
    </location>
</feature>
<feature type="strand" evidence="3">
    <location>
        <begin position="78"/>
        <end position="80"/>
    </location>
</feature>
<feature type="turn" evidence="3">
    <location>
        <begin position="87"/>
        <end position="89"/>
    </location>
</feature>
<feature type="helix" evidence="3">
    <location>
        <begin position="96"/>
        <end position="100"/>
    </location>
</feature>
<feature type="strand" evidence="3">
    <location>
        <begin position="104"/>
        <end position="113"/>
    </location>
</feature>
<feature type="helix" evidence="3">
    <location>
        <begin position="115"/>
        <end position="118"/>
    </location>
</feature>
<feature type="strand" evidence="3">
    <location>
        <begin position="119"/>
        <end position="122"/>
    </location>
</feature>
<feature type="helix" evidence="3">
    <location>
        <begin position="124"/>
        <end position="129"/>
    </location>
</feature>
<feature type="helix" evidence="3">
    <location>
        <begin position="133"/>
        <end position="140"/>
    </location>
</feature>
<feature type="strand" evidence="3">
    <location>
        <begin position="145"/>
        <end position="149"/>
    </location>
</feature>
<feature type="helix" evidence="3">
    <location>
        <begin position="164"/>
        <end position="170"/>
    </location>
</feature>
<feature type="strand" evidence="3">
    <location>
        <begin position="185"/>
        <end position="187"/>
    </location>
</feature>
<feature type="helix" evidence="3">
    <location>
        <begin position="189"/>
        <end position="198"/>
    </location>
</feature>
<feature type="helix" evidence="3">
    <location>
        <begin position="202"/>
        <end position="213"/>
    </location>
</feature>
<feature type="strand" evidence="3">
    <location>
        <begin position="214"/>
        <end position="216"/>
    </location>
</feature>
<feature type="helix" evidence="3">
    <location>
        <begin position="219"/>
        <end position="236"/>
    </location>
</feature>
<feature type="helix" evidence="3">
    <location>
        <begin position="241"/>
        <end position="244"/>
    </location>
</feature>
<feature type="strand" evidence="3">
    <location>
        <begin position="245"/>
        <end position="251"/>
    </location>
</feature>
<feature type="helix" evidence="3">
    <location>
        <begin position="254"/>
        <end position="256"/>
    </location>
</feature>
<feature type="strand" evidence="3">
    <location>
        <begin position="267"/>
        <end position="269"/>
    </location>
</feature>
<feature type="helix" evidence="3">
    <location>
        <begin position="272"/>
        <end position="291"/>
    </location>
</feature>
<feature type="helix" evidence="3">
    <location>
        <begin position="296"/>
        <end position="314"/>
    </location>
</feature>
<feature type="strand" evidence="3">
    <location>
        <begin position="318"/>
        <end position="320"/>
    </location>
</feature>
<feature type="strand" evidence="3">
    <location>
        <begin position="326"/>
        <end position="328"/>
    </location>
</feature>
<feature type="turn" evidence="3">
    <location>
        <begin position="334"/>
        <end position="338"/>
    </location>
</feature>
<feature type="helix" evidence="3">
    <location>
        <begin position="344"/>
        <end position="348"/>
    </location>
</feature>
<feature type="strand" evidence="3">
    <location>
        <begin position="350"/>
        <end position="353"/>
    </location>
</feature>
<feature type="strand" evidence="3">
    <location>
        <begin position="355"/>
        <end position="364"/>
    </location>
</feature>
<feature type="strand" evidence="3">
    <location>
        <begin position="372"/>
        <end position="376"/>
    </location>
</feature>
<feature type="helix" evidence="3">
    <location>
        <begin position="377"/>
        <end position="383"/>
    </location>
</feature>
<feature type="helix" evidence="3">
    <location>
        <begin position="385"/>
        <end position="394"/>
    </location>
</feature>
<feature type="helix" evidence="3">
    <location>
        <begin position="401"/>
        <end position="410"/>
    </location>
</feature>
<feature type="helix" evidence="3">
    <location>
        <begin position="413"/>
        <end position="422"/>
    </location>
</feature>
<feature type="strand" evidence="3">
    <location>
        <begin position="428"/>
        <end position="431"/>
    </location>
</feature>
<feature type="helix" evidence="3">
    <location>
        <begin position="438"/>
        <end position="440"/>
    </location>
</feature>
<feature type="strand" evidence="3">
    <location>
        <begin position="441"/>
        <end position="456"/>
    </location>
</feature>
<feature type="helix" evidence="3">
    <location>
        <begin position="461"/>
        <end position="464"/>
    </location>
</feature>
<feature type="turn" evidence="3">
    <location>
        <begin position="468"/>
        <end position="470"/>
    </location>
</feature>
<feature type="strand" evidence="3">
    <location>
        <begin position="472"/>
        <end position="476"/>
    </location>
</feature>
<feature type="helix" evidence="3">
    <location>
        <begin position="481"/>
        <end position="489"/>
    </location>
</feature>
<feature type="helix" evidence="3">
    <location>
        <begin position="493"/>
        <end position="495"/>
    </location>
</feature>
<feature type="strand" evidence="3">
    <location>
        <begin position="500"/>
        <end position="507"/>
    </location>
</feature>
<feature type="helix" evidence="3">
    <location>
        <begin position="513"/>
        <end position="520"/>
    </location>
</feature>
<feature type="strand" evidence="3">
    <location>
        <begin position="534"/>
        <end position="537"/>
    </location>
</feature>
<feature type="helix" evidence="3">
    <location>
        <begin position="538"/>
        <end position="546"/>
    </location>
</feature>
<feature type="strand" evidence="3">
    <location>
        <begin position="556"/>
        <end position="559"/>
    </location>
</feature>
<feature type="strand" evidence="3">
    <location>
        <begin position="567"/>
        <end position="569"/>
    </location>
</feature>
<feature type="strand" evidence="3">
    <location>
        <begin position="576"/>
        <end position="579"/>
    </location>
</feature>
<feature type="strand" evidence="3">
    <location>
        <begin position="585"/>
        <end position="588"/>
    </location>
</feature>
<feature type="strand" evidence="3">
    <location>
        <begin position="590"/>
        <end position="596"/>
    </location>
</feature>
<feature type="strand" evidence="3">
    <location>
        <begin position="598"/>
        <end position="600"/>
    </location>
</feature>
<feature type="strand" evidence="3">
    <location>
        <begin position="602"/>
        <end position="609"/>
    </location>
</feature>
<feature type="helix" evidence="3">
    <location>
        <begin position="611"/>
        <end position="624"/>
    </location>
</feature>
<keyword id="KW-0002">3D-structure</keyword>
<keyword id="KW-0240">DNA-directed RNA polymerase</keyword>
<keyword id="KW-0460">Magnesium</keyword>
<keyword id="KW-0479">Metal-binding</keyword>
<keyword id="KW-0548">Nucleotidyltransferase</keyword>
<keyword id="KW-1185">Reference proteome</keyword>
<keyword id="KW-0804">Transcription</keyword>
<keyword id="KW-0808">Transferase</keyword>
<keyword id="KW-0862">Zinc</keyword>
<reference key="1">
    <citation type="journal article" date="1996" name="DNA Res.">
        <title>Sequence analysis of the genome of the unicellular cyanobacterium Synechocystis sp. strain PCC6803. II. Sequence determination of the entire genome and assignment of potential protein-coding regions.</title>
        <authorList>
            <person name="Kaneko T."/>
            <person name="Sato S."/>
            <person name="Kotani H."/>
            <person name="Tanaka A."/>
            <person name="Asamizu E."/>
            <person name="Nakamura Y."/>
            <person name="Miyajima N."/>
            <person name="Hirosawa M."/>
            <person name="Sugiura M."/>
            <person name="Sasamoto S."/>
            <person name="Kimura T."/>
            <person name="Hosouchi T."/>
            <person name="Matsuno A."/>
            <person name="Muraki A."/>
            <person name="Nakazaki N."/>
            <person name="Naruo K."/>
            <person name="Okumura S."/>
            <person name="Shimpo S."/>
            <person name="Takeuchi C."/>
            <person name="Wada T."/>
            <person name="Watanabe A."/>
            <person name="Yamada M."/>
            <person name="Yasuda M."/>
            <person name="Tabata S."/>
        </authorList>
    </citation>
    <scope>NUCLEOTIDE SEQUENCE [LARGE SCALE GENOMIC DNA]</scope>
    <source>
        <strain>ATCC 27184 / PCC 6803 / Kazusa</strain>
    </source>
</reference>
<gene>
    <name evidence="1" type="primary">rpoC1</name>
    <name type="ordered locus">slr1265</name>
</gene>
<protein>
    <recommendedName>
        <fullName evidence="1">DNA-directed RNA polymerase subunit gamma</fullName>
        <shortName evidence="1">RNAP subunit gamma</shortName>
        <ecNumber evidence="1">2.7.7.6</ecNumber>
    </recommendedName>
    <alternativeName>
        <fullName evidence="1">RNA polymerase subunit gamma</fullName>
    </alternativeName>
    <alternativeName>
        <fullName evidence="1">Transcriptase subunit gamma</fullName>
    </alternativeName>
</protein>
<evidence type="ECO:0000255" key="1">
    <source>
        <dbReference type="HAMAP-Rule" id="MF_01323"/>
    </source>
</evidence>
<evidence type="ECO:0007829" key="2">
    <source>
        <dbReference type="PDB" id="8GZG"/>
    </source>
</evidence>
<evidence type="ECO:0007829" key="3">
    <source>
        <dbReference type="PDB" id="8GZH"/>
    </source>
</evidence>
<organism>
    <name type="scientific">Synechocystis sp. (strain ATCC 27184 / PCC 6803 / Kazusa)</name>
    <dbReference type="NCBI Taxonomy" id="1111708"/>
    <lineage>
        <taxon>Bacteria</taxon>
        <taxon>Bacillati</taxon>
        <taxon>Cyanobacteriota</taxon>
        <taxon>Cyanophyceae</taxon>
        <taxon>Synechococcales</taxon>
        <taxon>Merismopediaceae</taxon>
        <taxon>Synechocystis</taxon>
    </lineage>
</organism>
<comment type="function">
    <text evidence="1">DNA-dependent RNA polymerase catalyzes the transcription of DNA into RNA using the four ribonucleoside triphosphates as substrates.</text>
</comment>
<comment type="catalytic activity">
    <reaction evidence="1">
        <text>RNA(n) + a ribonucleoside 5'-triphosphate = RNA(n+1) + diphosphate</text>
        <dbReference type="Rhea" id="RHEA:21248"/>
        <dbReference type="Rhea" id="RHEA-COMP:14527"/>
        <dbReference type="Rhea" id="RHEA-COMP:17342"/>
        <dbReference type="ChEBI" id="CHEBI:33019"/>
        <dbReference type="ChEBI" id="CHEBI:61557"/>
        <dbReference type="ChEBI" id="CHEBI:140395"/>
        <dbReference type="EC" id="2.7.7.6"/>
    </reaction>
</comment>
<comment type="cofactor">
    <cofactor evidence="1">
        <name>Mg(2+)</name>
        <dbReference type="ChEBI" id="CHEBI:18420"/>
    </cofactor>
    <text evidence="1">Binds 1 Mg(2+) ion per subunit.</text>
</comment>
<comment type="cofactor">
    <cofactor evidence="1">
        <name>Zn(2+)</name>
        <dbReference type="ChEBI" id="CHEBI:29105"/>
    </cofactor>
    <text evidence="1">Binds 1 Zn(2+) ion per subunit.</text>
</comment>
<comment type="subunit">
    <text evidence="1">In cyanobacteria the RNAP catalytic core is composed of 2 alpha, 1 beta, 1 beta', 1 gamma and 1 omega subunit. When a sigma factor is associated with the core the holoenzyme is formed, which can initiate transcription.</text>
</comment>
<comment type="similarity">
    <text evidence="1">Belongs to the RNA polymerase beta' chain family. RpoC1 subfamily.</text>
</comment>
<accession>P74177</accession>
<sequence>MKAQSEPRFDYVKIAIASPERIRQWGERTLPNGTVVGEVTKPETINYRTLKPEMDGLFCEKIFGPSKDWECWCGKYKRVRHRGIVCERCGVEVTESRVRRHRMGYIKLAAPVTHVWYLKGIPSYLSILLDMALRDVEQIVYFNAYVVLNPGNASNLQYKQLLTEDQWVEIEDQIYAEDSELEGIEVGIGAEAVQRLLAELQLEEVAEKLREEILASKGQKRAKLIKRLRVIDNFIATHSQAEWMTLDVIPVIPPDLRPMVQLDGGRFATSDLNDLYRRVINRNNRLARLQEILAPEIIVRNEKRMLQEAVDALIDNGRRGRTVVGANNRALKSLSDIIEGKQGRFRQNLLGKRVDYSGRSVIVVGPNLKIYQCGLPREMAIELFQPFVIHRLIKLGIVNNIKAAKKLILKGDPQIWSVLEEVITGHPVMLNRAPTLHRLGIQAFEPILVEGRAIQLHPLVCPAFNADFDGDQMAVHVPLSLEAQCEARLLMLACHNVLSPATGKPIVAPSQDMVLGCYYLTAENPNAQKGAGRYFAGIEDALRAYDHGQVDLHSQIWIRHLDEDVVTEKPDTEVIKTEDLGDGTVMKYYRERKIREGVDGEIITQYIQTTPGRIIYNKTIAEALVF</sequence>